<keyword id="KW-0002">3D-structure</keyword>
<keyword id="KW-0903">Direct protein sequencing</keyword>
<keyword id="KW-1015">Disulfide bond</keyword>
<keyword id="KW-0393">Immunoglobulin domain</keyword>
<keyword id="KW-1185">Reference proteome</keyword>
<dbReference type="EMBL" id="V00807">
    <property type="protein sequence ID" value="CAA24189.1"/>
    <property type="molecule type" value="Genomic_DNA"/>
</dbReference>
<dbReference type="EMBL" id="AC153612">
    <property type="status" value="NOT_ANNOTATED_CDS"/>
    <property type="molecule type" value="Genomic_DNA"/>
</dbReference>
<dbReference type="PIR" id="B90262">
    <property type="entry name" value="K1MS"/>
</dbReference>
<dbReference type="PDB" id="15C8">
    <property type="method" value="X-ray"/>
    <property type="resolution" value="2.50 A"/>
    <property type="chains" value="L=1-105"/>
</dbReference>
<dbReference type="PDB" id="1A0Q">
    <property type="method" value="X-ray"/>
    <property type="resolution" value="2.30 A"/>
    <property type="chains" value="L=1-106"/>
</dbReference>
<dbReference type="PDB" id="1A3L">
    <property type="method" value="X-ray"/>
    <property type="resolution" value="1.95 A"/>
    <property type="chains" value="L=1-105"/>
</dbReference>
<dbReference type="PDB" id="1AHW">
    <property type="method" value="X-ray"/>
    <property type="resolution" value="3.00 A"/>
    <property type="chains" value="A/D=1-107"/>
</dbReference>
<dbReference type="PDB" id="1AI1">
    <property type="method" value="X-ray"/>
    <property type="resolution" value="2.80 A"/>
    <property type="chains" value="L=1-104"/>
</dbReference>
<dbReference type="PDB" id="1AIF">
    <property type="method" value="X-ray"/>
    <property type="resolution" value="2.90 A"/>
    <property type="chains" value="A/L=1-107"/>
</dbReference>
<dbReference type="PDB" id="1C12">
    <property type="method" value="X-ray"/>
    <property type="resolution" value="2.60 A"/>
    <property type="chains" value="A=1-106"/>
</dbReference>
<dbReference type="PDB" id="1CF8">
    <property type="method" value="X-ray"/>
    <property type="resolution" value="2.70 A"/>
    <property type="chains" value="L=1-107"/>
</dbReference>
<dbReference type="PDB" id="1CFN">
    <property type="method" value="X-ray"/>
    <property type="resolution" value="2.65 A"/>
    <property type="chains" value="A=1-107"/>
</dbReference>
<dbReference type="PDB" id="1CFQ">
    <property type="method" value="X-ray"/>
    <property type="resolution" value="2.80 A"/>
    <property type="chains" value="A=1-107"/>
</dbReference>
<dbReference type="PDB" id="1CFS">
    <property type="method" value="X-ray"/>
    <property type="resolution" value="2.75 A"/>
    <property type="chains" value="A=1-107"/>
</dbReference>
<dbReference type="PDB" id="1CFT">
    <property type="method" value="X-ray"/>
    <property type="resolution" value="2.80 A"/>
    <property type="chains" value="A=1-107"/>
</dbReference>
<dbReference type="PDB" id="1CIC">
    <property type="method" value="X-ray"/>
    <property type="resolution" value="2.50 A"/>
    <property type="chains" value="A=1-107"/>
</dbReference>
<dbReference type="PDB" id="1CK0">
    <property type="method" value="X-ray"/>
    <property type="resolution" value="2.50 A"/>
    <property type="chains" value="L=1-104"/>
</dbReference>
<dbReference type="PDB" id="1CT8">
    <property type="method" value="X-ray"/>
    <property type="resolution" value="2.20 A"/>
    <property type="chains" value="A/C=1-107"/>
</dbReference>
<dbReference type="PDB" id="1DQJ">
    <property type="method" value="X-ray"/>
    <property type="resolution" value="2.00 A"/>
    <property type="chains" value="A=1-107"/>
</dbReference>
<dbReference type="PDB" id="1DQM">
    <property type="method" value="X-ray"/>
    <property type="resolution" value="2.10 A"/>
    <property type="chains" value="L=1-107"/>
</dbReference>
<dbReference type="PDB" id="1DQQ">
    <property type="method" value="X-ray"/>
    <property type="resolution" value="1.80 A"/>
    <property type="chains" value="A/C=1-107"/>
</dbReference>
<dbReference type="PDB" id="1E4W">
    <property type="method" value="X-ray"/>
    <property type="resolution" value="1.95 A"/>
    <property type="chains" value="L=1-107"/>
</dbReference>
<dbReference type="PDB" id="1E4X">
    <property type="method" value="X-ray"/>
    <property type="resolution" value="1.90 A"/>
    <property type="chains" value="L/M=1-107"/>
</dbReference>
<dbReference type="PDB" id="1EHL">
    <property type="method" value="X-ray"/>
    <property type="resolution" value="2.40 A"/>
    <property type="chains" value="L=1-106"/>
</dbReference>
<dbReference type="PDB" id="1EMT">
    <property type="method" value="X-ray"/>
    <property type="resolution" value="2.25 A"/>
    <property type="chains" value="L=1-107"/>
</dbReference>
<dbReference type="PDB" id="1F11">
    <property type="method" value="X-ray"/>
    <property type="resolution" value="3.00 A"/>
    <property type="chains" value="A/C=2-107"/>
</dbReference>
<dbReference type="PDB" id="1FAI">
    <property type="method" value="X-ray"/>
    <property type="resolution" value="2.70 A"/>
    <property type="chains" value="L=1-107"/>
</dbReference>
<dbReference type="PDB" id="1FBI">
    <property type="method" value="X-ray"/>
    <property type="resolution" value="3.00 A"/>
    <property type="chains" value="L/P=1-107"/>
</dbReference>
<dbReference type="PDB" id="1FDL">
    <property type="method" value="X-ray"/>
    <property type="resolution" value="2.50 A"/>
    <property type="chains" value="L=1-107"/>
</dbReference>
<dbReference type="PDB" id="1FE8">
    <property type="method" value="X-ray"/>
    <property type="resolution" value="2.03 A"/>
    <property type="chains" value="L/M/N=1-104"/>
</dbReference>
<dbReference type="PDB" id="1FGN">
    <property type="method" value="X-ray"/>
    <property type="resolution" value="2.50 A"/>
    <property type="chains" value="L=1-107"/>
</dbReference>
<dbReference type="PDB" id="1FJ1">
    <property type="method" value="X-ray"/>
    <property type="resolution" value="2.68 A"/>
    <property type="chains" value="A/C=1-106"/>
</dbReference>
<dbReference type="PDB" id="1FL3">
    <property type="method" value="X-ray"/>
    <property type="resolution" value="2.45 A"/>
    <property type="chains" value="B/L=1-103"/>
</dbReference>
<dbReference type="PDB" id="1FNS">
    <property type="method" value="X-ray"/>
    <property type="resolution" value="2.00 A"/>
    <property type="chains" value="L=1-107"/>
</dbReference>
<dbReference type="PDB" id="1FRG">
    <property type="method" value="X-ray"/>
    <property type="resolution" value="2.80 A"/>
    <property type="chains" value="L=1-104"/>
</dbReference>
<dbReference type="PDB" id="1FSK">
    <property type="method" value="X-ray"/>
    <property type="resolution" value="2.90 A"/>
    <property type="chains" value="B/E/H/K=1-107"/>
</dbReference>
<dbReference type="PDB" id="1GPO">
    <property type="method" value="X-ray"/>
    <property type="resolution" value="1.95 A"/>
    <property type="chains" value="L/M=1-107"/>
</dbReference>
<dbReference type="PDB" id="1HH6">
    <property type="method" value="X-ray"/>
    <property type="resolution" value="2.60 A"/>
    <property type="chains" value="A=1-107"/>
</dbReference>
<dbReference type="PDB" id="1HH9">
    <property type="method" value="X-ray"/>
    <property type="resolution" value="2.70 A"/>
    <property type="chains" value="A=1-107"/>
</dbReference>
<dbReference type="PDB" id="1HI6">
    <property type="method" value="X-ray"/>
    <property type="resolution" value="2.55 A"/>
    <property type="chains" value="A=1-107"/>
</dbReference>
<dbReference type="PDB" id="1I8M">
    <property type="method" value="X-ray"/>
    <property type="resolution" value="2.10 A"/>
    <property type="chains" value="A/L=1-107"/>
</dbReference>
<dbReference type="PDB" id="1IAI">
    <property type="method" value="X-ray"/>
    <property type="resolution" value="2.90 A"/>
    <property type="chains" value="M=1-107"/>
</dbReference>
<dbReference type="PDB" id="1IGY">
    <property type="method" value="X-ray"/>
    <property type="resolution" value="3.20 A"/>
    <property type="chains" value="A/C=1-107"/>
</dbReference>
<dbReference type="PDB" id="1JNL">
    <property type="method" value="X-ray"/>
    <property type="resolution" value="3.00 A"/>
    <property type="chains" value="L=1-104"/>
</dbReference>
<dbReference type="PDB" id="1JNN">
    <property type="method" value="X-ray"/>
    <property type="resolution" value="3.20 A"/>
    <property type="chains" value="L=1-104"/>
</dbReference>
<dbReference type="PDB" id="1JRH">
    <property type="method" value="X-ray"/>
    <property type="resolution" value="2.80 A"/>
    <property type="chains" value="L=1-107"/>
</dbReference>
<dbReference type="PDB" id="1K4C">
    <property type="method" value="X-ray"/>
    <property type="resolution" value="2.00 A"/>
    <property type="chains" value="B=1-105"/>
</dbReference>
<dbReference type="PDB" id="1K4D">
    <property type="method" value="X-ray"/>
    <property type="resolution" value="2.30 A"/>
    <property type="chains" value="B=1-105"/>
</dbReference>
<dbReference type="PDB" id="1KB5">
    <property type="method" value="X-ray"/>
    <property type="resolution" value="2.50 A"/>
    <property type="chains" value="L=1-107"/>
</dbReference>
<dbReference type="PDB" id="1KC5">
    <property type="method" value="X-ray"/>
    <property type="resolution" value="2.50 A"/>
    <property type="chains" value="L=1-107"/>
</dbReference>
<dbReference type="PDB" id="1KCR">
    <property type="method" value="X-ray"/>
    <property type="resolution" value="2.90 A"/>
    <property type="chains" value="L=1-107"/>
</dbReference>
<dbReference type="PDB" id="1KCS">
    <property type="method" value="X-ray"/>
    <property type="resolution" value="2.50 A"/>
    <property type="chains" value="L=1-107"/>
</dbReference>
<dbReference type="PDB" id="1KCU">
    <property type="method" value="X-ray"/>
    <property type="resolution" value="2.20 A"/>
    <property type="chains" value="L=1-107"/>
</dbReference>
<dbReference type="PDB" id="1KCV">
    <property type="method" value="X-ray"/>
    <property type="resolution" value="1.80 A"/>
    <property type="chains" value="L=1-107"/>
</dbReference>
<dbReference type="PDB" id="1KEN">
    <property type="method" value="X-ray"/>
    <property type="resolution" value="3.50 A"/>
    <property type="chains" value="L/U=1-105"/>
</dbReference>
<dbReference type="PDB" id="1KNO">
    <property type="method" value="X-ray"/>
    <property type="resolution" value="3.20 A"/>
    <property type="chains" value="A/C/E=1-107"/>
</dbReference>
<dbReference type="PDB" id="1LO0">
    <property type="method" value="X-ray"/>
    <property type="resolution" value="2.00 A"/>
    <property type="chains" value="L/X=1-107"/>
</dbReference>
<dbReference type="PDB" id="1MF2">
    <property type="method" value="X-ray"/>
    <property type="resolution" value="2.60 A"/>
    <property type="chains" value="L/M=1-104"/>
</dbReference>
<dbReference type="PDB" id="1MH5">
    <property type="method" value="X-ray"/>
    <property type="resolution" value="2.10 A"/>
    <property type="chains" value="A/L=1-107"/>
</dbReference>
<dbReference type="PDB" id="1MLB">
    <property type="method" value="X-ray"/>
    <property type="resolution" value="2.10 A"/>
    <property type="chains" value="A=1-107"/>
</dbReference>
<dbReference type="PDB" id="1MLC">
    <property type="method" value="X-ray"/>
    <property type="resolution" value="2.50 A"/>
    <property type="chains" value="A/C=1-107"/>
</dbReference>
<dbReference type="PDB" id="1N5Y">
    <property type="method" value="X-ray"/>
    <property type="resolution" value="3.10 A"/>
    <property type="chains" value="L=1-104"/>
</dbReference>
<dbReference type="PDB" id="1N6Q">
    <property type="method" value="X-ray"/>
    <property type="resolution" value="3.00 A"/>
    <property type="chains" value="L=1-104"/>
</dbReference>
<dbReference type="PDB" id="1NBY">
    <property type="method" value="X-ray"/>
    <property type="resolution" value="1.80 A"/>
    <property type="chains" value="A=1-107"/>
</dbReference>
<dbReference type="PDB" id="1NBZ">
    <property type="method" value="X-ray"/>
    <property type="resolution" value="1.85 A"/>
    <property type="chains" value="A=1-107"/>
</dbReference>
<dbReference type="PDB" id="1NDG">
    <property type="method" value="X-ray"/>
    <property type="resolution" value="1.90 A"/>
    <property type="chains" value="A=1-107"/>
</dbReference>
<dbReference type="PDB" id="1NDM">
    <property type="method" value="X-ray"/>
    <property type="resolution" value="2.10 A"/>
    <property type="chains" value="A=1-107"/>
</dbReference>
<dbReference type="PDB" id="1OAK">
    <property type="method" value="X-ray"/>
    <property type="resolution" value="2.20 A"/>
    <property type="chains" value="L=1-105"/>
</dbReference>
<dbReference type="PDB" id="1OB1">
    <property type="method" value="X-ray"/>
    <property type="resolution" value="2.90 A"/>
    <property type="chains" value="A/D=1-107"/>
</dbReference>
<dbReference type="PDB" id="1ORQ">
    <property type="method" value="X-ray"/>
    <property type="resolution" value="3.20 A"/>
    <property type="chains" value="A=1-107"/>
</dbReference>
<dbReference type="PDB" id="1ORS">
    <property type="method" value="X-ray"/>
    <property type="resolution" value="1.90 A"/>
    <property type="chains" value="A=1-107"/>
</dbReference>
<dbReference type="PDB" id="1OSP">
    <property type="method" value="X-ray"/>
    <property type="resolution" value="1.95 A"/>
    <property type="chains" value="L=1-107"/>
</dbReference>
<dbReference type="PDB" id="1OTS">
    <property type="method" value="X-ray"/>
    <property type="resolution" value="2.51 A"/>
    <property type="chains" value="D/F=1-104"/>
</dbReference>
<dbReference type="PDB" id="1OTT">
    <property type="method" value="X-ray"/>
    <property type="resolution" value="3.00 A"/>
    <property type="chains" value="D/F=1-104"/>
</dbReference>
<dbReference type="PDB" id="1OTU">
    <property type="method" value="X-ray"/>
    <property type="resolution" value="3.30 A"/>
    <property type="chains" value="D/F=1-104"/>
</dbReference>
<dbReference type="PDB" id="1P2C">
    <property type="method" value="X-ray"/>
    <property type="resolution" value="2.00 A"/>
    <property type="chains" value="A/D=1-105"/>
</dbReference>
<dbReference type="PDB" id="1P7K">
    <property type="method" value="X-ray"/>
    <property type="resolution" value="1.75 A"/>
    <property type="chains" value="A/L=1-107"/>
</dbReference>
<dbReference type="PDB" id="1PSK">
    <property type="method" value="X-ray"/>
    <property type="resolution" value="2.80 A"/>
    <property type="chains" value="L=1-107"/>
</dbReference>
<dbReference type="PDB" id="1Q9O">
    <property type="method" value="X-ray"/>
    <property type="resolution" value="1.79 A"/>
    <property type="chains" value="A/C=1-107"/>
</dbReference>
<dbReference type="PDB" id="1Q9W">
    <property type="method" value="X-ray"/>
    <property type="resolution" value="1.75 A"/>
    <property type="chains" value="A/C=1-107"/>
</dbReference>
<dbReference type="PDB" id="1QGC">
    <property type="method" value="EM"/>
    <property type="resolution" value="30.00 A"/>
    <property type="chains" value="4=1-107"/>
</dbReference>
<dbReference type="PDB" id="1R0A">
    <property type="method" value="X-ray"/>
    <property type="resolution" value="2.80 A"/>
    <property type="chains" value="L=1-104"/>
</dbReference>
<dbReference type="PDB" id="1R24">
    <property type="method" value="X-ray"/>
    <property type="resolution" value="3.10 A"/>
    <property type="chains" value="A/C=1-99"/>
</dbReference>
<dbReference type="PDB" id="1R3I">
    <property type="method" value="X-ray"/>
    <property type="resolution" value="2.40 A"/>
    <property type="chains" value="L=1-105"/>
</dbReference>
<dbReference type="PDB" id="1R3J">
    <property type="method" value="X-ray"/>
    <property type="resolution" value="1.90 A"/>
    <property type="chains" value="A=1-105"/>
</dbReference>
<dbReference type="PDB" id="1R3K">
    <property type="method" value="X-ray"/>
    <property type="resolution" value="2.80 A"/>
    <property type="chains" value="A=1-105"/>
</dbReference>
<dbReference type="PDB" id="1R3L">
    <property type="method" value="X-ray"/>
    <property type="resolution" value="2.41 A"/>
    <property type="chains" value="A=1-105"/>
</dbReference>
<dbReference type="PDB" id="1RIH">
    <property type="method" value="X-ray"/>
    <property type="resolution" value="2.50 A"/>
    <property type="chains" value="L=1-107"/>
</dbReference>
<dbReference type="PDB" id="1RUQ">
    <property type="method" value="X-ray"/>
    <property type="resolution" value="1.86 A"/>
    <property type="chains" value="L=1-105"/>
</dbReference>
<dbReference type="PDB" id="1RUR">
    <property type="method" value="X-ray"/>
    <property type="resolution" value="1.50 A"/>
    <property type="chains" value="L=1-105"/>
</dbReference>
<dbReference type="PDB" id="1S5H">
    <property type="method" value="X-ray"/>
    <property type="resolution" value="2.20 A"/>
    <property type="chains" value="A=1-105"/>
</dbReference>
<dbReference type="PDB" id="1SEQ">
    <property type="method" value="X-ray"/>
    <property type="resolution" value="1.78 A"/>
    <property type="chains" value="L=1-107"/>
</dbReference>
<dbReference type="PDB" id="1T03">
    <property type="method" value="X-ray"/>
    <property type="resolution" value="3.10 A"/>
    <property type="chains" value="L=1-104"/>
</dbReference>
<dbReference type="PDB" id="1T4K">
    <property type="method" value="X-ray"/>
    <property type="resolution" value="2.50 A"/>
    <property type="chains" value="C=1-105"/>
</dbReference>
<dbReference type="PDB" id="1UB5">
    <property type="method" value="X-ray"/>
    <property type="resolution" value="2.00 A"/>
    <property type="chains" value="B/L=1-102"/>
</dbReference>
<dbReference type="PDB" id="1UB6">
    <property type="method" value="X-ray"/>
    <property type="resolution" value="2.12 A"/>
    <property type="chains" value="B/L=1-102"/>
</dbReference>
<dbReference type="PDB" id="1UWX">
    <property type="method" value="X-ray"/>
    <property type="resolution" value="2.20 A"/>
    <property type="chains" value="K/L=1-106"/>
</dbReference>
<dbReference type="PDB" id="1XF2">
    <property type="method" value="X-ray"/>
    <property type="resolution" value="2.30 A"/>
    <property type="chains" value="A/L=1-107"/>
</dbReference>
<dbReference type="PDB" id="1XF3">
    <property type="method" value="X-ray"/>
    <property type="resolution" value="2.30 A"/>
    <property type="chains" value="A/L=1-107"/>
</dbReference>
<dbReference type="PDB" id="1XF4">
    <property type="method" value="X-ray"/>
    <property type="resolution" value="2.50 A"/>
    <property type="chains" value="A/L=1-107"/>
</dbReference>
<dbReference type="PDB" id="1XGP">
    <property type="method" value="X-ray"/>
    <property type="resolution" value="2.10 A"/>
    <property type="chains" value="A=1-107"/>
</dbReference>
<dbReference type="PDB" id="1XGQ">
    <property type="method" value="X-ray"/>
    <property type="resolution" value="2.10 A"/>
    <property type="chains" value="A=1-107"/>
</dbReference>
<dbReference type="PDB" id="1XGU">
    <property type="method" value="X-ray"/>
    <property type="resolution" value="2.10 A"/>
    <property type="chains" value="A=1-107"/>
</dbReference>
<dbReference type="PDB" id="25C8">
    <property type="method" value="X-ray"/>
    <property type="resolution" value="2.00 A"/>
    <property type="chains" value="L=1-104"/>
</dbReference>
<dbReference type="PDB" id="2A6D">
    <property type="method" value="X-ray"/>
    <property type="resolution" value="2.90 A"/>
    <property type="chains" value="L=1-107"/>
</dbReference>
<dbReference type="PDB" id="2A6K">
    <property type="method" value="X-ray"/>
    <property type="resolution" value="3.00 A"/>
    <property type="chains" value="A/L=1-107"/>
</dbReference>
<dbReference type="PDB" id="2ADF">
    <property type="method" value="X-ray"/>
    <property type="resolution" value="1.90 A"/>
    <property type="chains" value="L=1-103"/>
</dbReference>
<dbReference type="PDB" id="2ADJ">
    <property type="method" value="X-ray"/>
    <property type="resolution" value="2.90 A"/>
    <property type="chains" value="A=1-107"/>
</dbReference>
<dbReference type="PDB" id="2AJS">
    <property type="method" value="X-ray"/>
    <property type="resolution" value="1.70 A"/>
    <property type="chains" value="L=1-104"/>
</dbReference>
<dbReference type="PDB" id="2AJU">
    <property type="method" value="X-ray"/>
    <property type="resolution" value="1.50 A"/>
    <property type="chains" value="L=1-104"/>
</dbReference>
<dbReference type="PDB" id="2AJV">
    <property type="method" value="X-ray"/>
    <property type="resolution" value="1.50 A"/>
    <property type="chains" value="L=1-104"/>
</dbReference>
<dbReference type="PDB" id="2AJX">
    <property type="method" value="X-ray"/>
    <property type="resolution" value="1.85 A"/>
    <property type="chains" value="L=1-104"/>
</dbReference>
<dbReference type="PDB" id="2AJY">
    <property type="method" value="X-ray"/>
    <property type="resolution" value="2.10 A"/>
    <property type="chains" value="L=1-104"/>
</dbReference>
<dbReference type="PDB" id="2AJZ">
    <property type="method" value="X-ray"/>
    <property type="resolution" value="2.30 A"/>
    <property type="chains" value="A/L=1-104"/>
</dbReference>
<dbReference type="PDB" id="2AK1">
    <property type="method" value="X-ray"/>
    <property type="resolution" value="1.85 A"/>
    <property type="chains" value="L=1-104"/>
</dbReference>
<dbReference type="PDB" id="2BOB">
    <property type="method" value="X-ray"/>
    <property type="resolution" value="2.76 A"/>
    <property type="chains" value="B=1-105"/>
</dbReference>
<dbReference type="PDB" id="2BOC">
    <property type="method" value="X-ray"/>
    <property type="resolution" value="3.01 A"/>
    <property type="chains" value="B=1-105"/>
</dbReference>
<dbReference type="PDB" id="2CK0">
    <property type="method" value="X-ray"/>
    <property type="resolution" value="2.20 A"/>
    <property type="chains" value="L=1-104"/>
</dbReference>
<dbReference type="PDB" id="2F19">
    <property type="method" value="X-ray"/>
    <property type="resolution" value="2.80 A"/>
    <property type="chains" value="L=1-107"/>
</dbReference>
<dbReference type="PDB" id="2FR4">
    <property type="method" value="X-ray"/>
    <property type="resolution" value="1.95 A"/>
    <property type="chains" value="A=1-107"/>
</dbReference>
<dbReference type="PDB" id="2G5B">
    <property type="method" value="X-ray"/>
    <property type="resolution" value="2.30 A"/>
    <property type="chains" value="C/E/G=1-105"/>
</dbReference>
<dbReference type="PDB" id="2H8P">
    <property type="method" value="X-ray"/>
    <property type="resolution" value="2.25 A"/>
    <property type="chains" value="B=1-105"/>
</dbReference>
<dbReference type="PDB" id="2HG5">
    <property type="method" value="X-ray"/>
    <property type="resolution" value="2.75 A"/>
    <property type="chains" value="B=1-105"/>
</dbReference>
<dbReference type="PDB" id="2HRP">
    <property type="method" value="X-ray"/>
    <property type="resolution" value="2.20 A"/>
    <property type="chains" value="L/M=1-107"/>
</dbReference>
<dbReference type="PDB" id="2MPA">
    <property type="method" value="X-ray"/>
    <property type="resolution" value="2.60 A"/>
    <property type="chains" value="L=9-13"/>
</dbReference>
<dbReference type="PDB" id="2NR6">
    <property type="method" value="X-ray"/>
    <property type="resolution" value="2.81 A"/>
    <property type="chains" value="C/E=1-104"/>
</dbReference>
<dbReference type="PDB" id="2Q76">
    <property type="method" value="X-ray"/>
    <property type="resolution" value="2.00 A"/>
    <property type="chains" value="A/C=1-105"/>
</dbReference>
<dbReference type="PDB" id="2R1W">
    <property type="method" value="X-ray"/>
    <property type="resolution" value="1.70 A"/>
    <property type="chains" value="A=1-107"/>
</dbReference>
<dbReference type="PDB" id="2R1Y">
    <property type="method" value="X-ray"/>
    <property type="resolution" value="1.60 A"/>
    <property type="chains" value="A=1-107"/>
</dbReference>
<dbReference type="PDB" id="2R23">
    <property type="method" value="X-ray"/>
    <property type="resolution" value="1.65 A"/>
    <property type="chains" value="A=1-107"/>
</dbReference>
<dbReference type="PDB" id="2R2B">
    <property type="method" value="X-ray"/>
    <property type="resolution" value="1.60 A"/>
    <property type="chains" value="A=1-107"/>
</dbReference>
<dbReference type="PDB" id="2UYL">
    <property type="method" value="X-ray"/>
    <property type="resolution" value="2.50 A"/>
    <property type="chains" value="A/M/V/X=1-107"/>
</dbReference>
<dbReference type="PDB" id="2V17">
    <property type="method" value="X-ray"/>
    <property type="resolution" value="1.65 A"/>
    <property type="chains" value="L=1-107"/>
</dbReference>
<dbReference type="PDB" id="2V7H">
    <property type="method" value="X-ray"/>
    <property type="resolution" value="2.80 A"/>
    <property type="chains" value="A/L=1-107"/>
</dbReference>
<dbReference type="PDB" id="2VC2">
    <property type="method" value="X-ray"/>
    <property type="resolution" value="3.10 A"/>
    <property type="chains" value="L=1-107"/>
</dbReference>
<dbReference type="PDB" id="2VDK">
    <property type="method" value="X-ray"/>
    <property type="resolution" value="2.80 A"/>
    <property type="chains" value="L=1-107"/>
</dbReference>
<dbReference type="PDB" id="2VDL">
    <property type="method" value="X-ray"/>
    <property type="resolution" value="2.75 A"/>
    <property type="chains" value="L=1-107"/>
</dbReference>
<dbReference type="PDB" id="2VDM">
    <property type="method" value="X-ray"/>
    <property type="resolution" value="2.90 A"/>
    <property type="chains" value="L=1-107"/>
</dbReference>
<dbReference type="PDB" id="2VDN">
    <property type="method" value="X-ray"/>
    <property type="resolution" value="2.90 A"/>
    <property type="chains" value="L=1-107"/>
</dbReference>
<dbReference type="PDB" id="2VDO">
    <property type="method" value="X-ray"/>
    <property type="resolution" value="2.51 A"/>
    <property type="chains" value="L=1-107"/>
</dbReference>
<dbReference type="PDB" id="2VDP">
    <property type="method" value="X-ray"/>
    <property type="resolution" value="2.80 A"/>
    <property type="chains" value="L=1-107"/>
</dbReference>
<dbReference type="PDB" id="2VDQ">
    <property type="method" value="X-ray"/>
    <property type="resolution" value="2.59 A"/>
    <property type="chains" value="L=1-107"/>
</dbReference>
<dbReference type="PDB" id="2VDR">
    <property type="method" value="X-ray"/>
    <property type="resolution" value="2.40 A"/>
    <property type="chains" value="L=1-107"/>
</dbReference>
<dbReference type="PDB" id="2VL5">
    <property type="method" value="X-ray"/>
    <property type="resolution" value="2.10 A"/>
    <property type="chains" value="B/D=1-107"/>
</dbReference>
<dbReference type="PDB" id="2VQ1">
    <property type="method" value="X-ray"/>
    <property type="resolution" value="2.50 A"/>
    <property type="chains" value="A/E=1-105"/>
</dbReference>
<dbReference type="PDB" id="2VWE">
    <property type="method" value="X-ray"/>
    <property type="resolution" value="3.40 A"/>
    <property type="chains" value="C/J=1-107"/>
</dbReference>
<dbReference type="PDB" id="2W60">
    <property type="method" value="X-ray"/>
    <property type="resolution" value="1.50 A"/>
    <property type="chains" value="B=1-105"/>
</dbReference>
<dbReference type="PDB" id="2W65">
    <property type="method" value="X-ray"/>
    <property type="resolution" value="2.21 A"/>
    <property type="chains" value="B/D=1-105"/>
</dbReference>
<dbReference type="PDB" id="2W9D">
    <property type="method" value="X-ray"/>
    <property type="resolution" value="1.57 A"/>
    <property type="chains" value="L=1-106"/>
</dbReference>
<dbReference type="PDB" id="2W9E">
    <property type="method" value="X-ray"/>
    <property type="resolution" value="2.90 A"/>
    <property type="chains" value="L=1-106"/>
</dbReference>
<dbReference type="PDB" id="2Z91">
    <property type="method" value="X-ray"/>
    <property type="resolution" value="2.60 A"/>
    <property type="chains" value="B/D=1-107"/>
</dbReference>
<dbReference type="PDB" id="2Z92">
    <property type="method" value="X-ray"/>
    <property type="resolution" value="2.30 A"/>
    <property type="chains" value="B=1-107"/>
</dbReference>
<dbReference type="PDB" id="2Z93">
    <property type="method" value="X-ray"/>
    <property type="resolution" value="2.40 A"/>
    <property type="chains" value="B/D=1-107"/>
</dbReference>
<dbReference type="PDB" id="2ZJS">
    <property type="method" value="X-ray"/>
    <property type="resolution" value="3.20 A"/>
    <property type="chains" value="L=1-107"/>
</dbReference>
<dbReference type="PDB" id="35C8">
    <property type="method" value="X-ray"/>
    <property type="resolution" value="2.00 A"/>
    <property type="chains" value="L=1-104"/>
</dbReference>
<dbReference type="PDB" id="3BAE">
    <property type="method" value="X-ray"/>
    <property type="resolution" value="1.59 A"/>
    <property type="chains" value="L=1-106"/>
</dbReference>
<dbReference type="PDB" id="3BGF">
    <property type="method" value="X-ray"/>
    <property type="resolution" value="3.00 A"/>
    <property type="chains" value="C/L=1-105"/>
</dbReference>
<dbReference type="PDB" id="3BKC">
    <property type="method" value="X-ray"/>
    <property type="resolution" value="1.90 A"/>
    <property type="chains" value="L=1-107"/>
</dbReference>
<dbReference type="PDB" id="3BKJ">
    <property type="method" value="X-ray"/>
    <property type="resolution" value="1.59 A"/>
    <property type="chains" value="L=1-107"/>
</dbReference>
<dbReference type="PDB" id="3BKM">
    <property type="method" value="X-ray"/>
    <property type="resolution" value="1.60 A"/>
    <property type="chains" value="L=1-107"/>
</dbReference>
<dbReference type="PDB" id="3BPC">
    <property type="method" value="X-ray"/>
    <property type="resolution" value="1.85 A"/>
    <property type="chains" value="A=1-107"/>
</dbReference>
<dbReference type="PDB" id="3BQU">
    <property type="method" value="X-ray"/>
    <property type="resolution" value="3.00 A"/>
    <property type="chains" value="C=1-104"/>
</dbReference>
<dbReference type="PDB" id="3BSZ">
    <property type="method" value="X-ray"/>
    <property type="resolution" value="3.38 A"/>
    <property type="chains" value="L/M=1-104"/>
</dbReference>
<dbReference type="PDB" id="3BT2">
    <property type="method" value="X-ray"/>
    <property type="resolution" value="2.50 A"/>
    <property type="chains" value="L=1-107"/>
</dbReference>
<dbReference type="PDB" id="3BZ4">
    <property type="method" value="X-ray"/>
    <property type="resolution" value="1.80 A"/>
    <property type="chains" value="A/C/E/G=1-107"/>
</dbReference>
<dbReference type="PDB" id="3C5S">
    <property type="method" value="X-ray"/>
    <property type="resolution" value="2.00 A"/>
    <property type="chains" value="A/C=1-107"/>
</dbReference>
<dbReference type="PDB" id="3C6S">
    <property type="method" value="X-ray"/>
    <property type="resolution" value="1.80 A"/>
    <property type="chains" value="A/C/E/G=1-107"/>
</dbReference>
<dbReference type="PDB" id="3CFB">
    <property type="method" value="X-ray"/>
    <property type="resolution" value="1.60 A"/>
    <property type="chains" value="A/L=1-107"/>
</dbReference>
<dbReference type="PDB" id="3CFC">
    <property type="method" value="X-ray"/>
    <property type="resolution" value="1.70 A"/>
    <property type="chains" value="L=1-107"/>
</dbReference>
<dbReference type="PDB" id="3CFD">
    <property type="method" value="X-ray"/>
    <property type="resolution" value="2.50 A"/>
    <property type="chains" value="A/L=1-107"/>
</dbReference>
<dbReference type="PDB" id="3CFE">
    <property type="method" value="X-ray"/>
    <property type="resolution" value="2.99 A"/>
    <property type="chains" value="A/L=1-107"/>
</dbReference>
<dbReference type="PDB" id="3CK0">
    <property type="method" value="X-ray"/>
    <property type="resolution" value="3.00 A"/>
    <property type="chains" value="L=1-104"/>
</dbReference>
<dbReference type="PDB" id="3CLE">
    <property type="method" value="X-ray"/>
    <property type="resolution" value="2.50 A"/>
    <property type="chains" value="L=1-107"/>
</dbReference>
<dbReference type="PDB" id="3CLF">
    <property type="method" value="X-ray"/>
    <property type="resolution" value="2.00 A"/>
    <property type="chains" value="L=1-107"/>
</dbReference>
<dbReference type="PDB" id="3CMO">
    <property type="method" value="X-ray"/>
    <property type="resolution" value="2.30 A"/>
    <property type="chains" value="L/X=1-104"/>
</dbReference>
<dbReference type="PDB" id="3CVH">
    <property type="method" value="X-ray"/>
    <property type="resolution" value="2.90 A"/>
    <property type="chains" value="L/R=1-103"/>
</dbReference>
<dbReference type="PDB" id="3CVI">
    <property type="method" value="X-ray"/>
    <property type="resolution" value="1.80 A"/>
    <property type="chains" value="L=1-103"/>
</dbReference>
<dbReference type="PDB" id="3D9A">
    <property type="method" value="X-ray"/>
    <property type="resolution" value="1.20 A"/>
    <property type="chains" value="L=1-106"/>
</dbReference>
<dbReference type="PDB" id="3EJZ">
    <property type="method" value="X-ray"/>
    <property type="resolution" value="2.90 A"/>
    <property type="chains" value="D/F=1-104"/>
</dbReference>
<dbReference type="PDB" id="3EOT">
    <property type="method" value="X-ray"/>
    <property type="resolution" value="1.90 A"/>
    <property type="chains" value="L=1-107"/>
</dbReference>
<dbReference type="PDB" id="3F7V">
    <property type="method" value="X-ray"/>
    <property type="resolution" value="3.20 A"/>
    <property type="chains" value="B=1-105"/>
</dbReference>
<dbReference type="PDB" id="3F7Y">
    <property type="method" value="X-ray"/>
    <property type="resolution" value="3.40 A"/>
    <property type="chains" value="B=1-105"/>
</dbReference>
<dbReference type="PDB" id="3FB6">
    <property type="method" value="X-ray"/>
    <property type="resolution" value="3.00 A"/>
    <property type="chains" value="B=1-105"/>
</dbReference>
<dbReference type="PDB" id="3HFM">
    <property type="method" value="X-ray"/>
    <property type="resolution" value="3.00 A"/>
    <property type="chains" value="L=1-107"/>
</dbReference>
<dbReference type="PDB" id="4KK5">
    <property type="method" value="X-ray"/>
    <property type="resolution" value="3.17 A"/>
    <property type="chains" value="D/F=1-104"/>
</dbReference>
<dbReference type="PDB" id="4KK8">
    <property type="method" value="X-ray"/>
    <property type="resolution" value="2.86 A"/>
    <property type="chains" value="D/F=1-104"/>
</dbReference>
<dbReference type="PDB" id="4KVC">
    <property type="method" value="X-ray"/>
    <property type="resolution" value="2.31 A"/>
    <property type="chains" value="L=1-105"/>
</dbReference>
<dbReference type="PDB" id="4QNP">
    <property type="method" value="X-ray"/>
    <property type="resolution" value="2.80 A"/>
    <property type="chains" value="F/L=1-106"/>
</dbReference>
<dbReference type="PDB" id="4ZXB">
    <property type="method" value="X-ray"/>
    <property type="resolution" value="3.30 A"/>
    <property type="chains" value="B=1-107"/>
</dbReference>
<dbReference type="PDB" id="6FAB">
    <property type="method" value="X-ray"/>
    <property type="resolution" value="1.90 A"/>
    <property type="chains" value="L=1-107"/>
</dbReference>
<dbReference type="PDB" id="8XKK">
    <property type="method" value="NMR"/>
    <property type="chains" value="A=2-106"/>
</dbReference>
<dbReference type="PDBsum" id="15C8"/>
<dbReference type="PDBsum" id="1A0Q"/>
<dbReference type="PDBsum" id="1A3L"/>
<dbReference type="PDBsum" id="1AHW"/>
<dbReference type="PDBsum" id="1AI1"/>
<dbReference type="PDBsum" id="1AIF"/>
<dbReference type="PDBsum" id="1C12"/>
<dbReference type="PDBsum" id="1CF8"/>
<dbReference type="PDBsum" id="1CFN"/>
<dbReference type="PDBsum" id="1CFQ"/>
<dbReference type="PDBsum" id="1CFS"/>
<dbReference type="PDBsum" id="1CFT"/>
<dbReference type="PDBsum" id="1CIC"/>
<dbReference type="PDBsum" id="1CK0"/>
<dbReference type="PDBsum" id="1CT8"/>
<dbReference type="PDBsum" id="1DQJ"/>
<dbReference type="PDBsum" id="1DQM"/>
<dbReference type="PDBsum" id="1DQQ"/>
<dbReference type="PDBsum" id="1E4W"/>
<dbReference type="PDBsum" id="1E4X"/>
<dbReference type="PDBsum" id="1EHL"/>
<dbReference type="PDBsum" id="1EMT"/>
<dbReference type="PDBsum" id="1F11"/>
<dbReference type="PDBsum" id="1FAI"/>
<dbReference type="PDBsum" id="1FBI"/>
<dbReference type="PDBsum" id="1FDL"/>
<dbReference type="PDBsum" id="1FE8"/>
<dbReference type="PDBsum" id="1FGN"/>
<dbReference type="PDBsum" id="1FJ1"/>
<dbReference type="PDBsum" id="1FL3"/>
<dbReference type="PDBsum" id="1FNS"/>
<dbReference type="PDBsum" id="1FRG"/>
<dbReference type="PDBsum" id="1FSK"/>
<dbReference type="PDBsum" id="1GPO"/>
<dbReference type="PDBsum" id="1HH6"/>
<dbReference type="PDBsum" id="1HH9"/>
<dbReference type="PDBsum" id="1HI6"/>
<dbReference type="PDBsum" id="1I8M"/>
<dbReference type="PDBsum" id="1IAI"/>
<dbReference type="PDBsum" id="1IGY"/>
<dbReference type="PDBsum" id="1JNL"/>
<dbReference type="PDBsum" id="1JNN"/>
<dbReference type="PDBsum" id="1JRH"/>
<dbReference type="PDBsum" id="1K4C"/>
<dbReference type="PDBsum" id="1K4D"/>
<dbReference type="PDBsum" id="1KB5"/>
<dbReference type="PDBsum" id="1KC5"/>
<dbReference type="PDBsum" id="1KCR"/>
<dbReference type="PDBsum" id="1KCS"/>
<dbReference type="PDBsum" id="1KCU"/>
<dbReference type="PDBsum" id="1KCV"/>
<dbReference type="PDBsum" id="1KEN"/>
<dbReference type="PDBsum" id="1KNO"/>
<dbReference type="PDBsum" id="1LO0"/>
<dbReference type="PDBsum" id="1MF2"/>
<dbReference type="PDBsum" id="1MH5"/>
<dbReference type="PDBsum" id="1MLB"/>
<dbReference type="PDBsum" id="1MLC"/>
<dbReference type="PDBsum" id="1N5Y"/>
<dbReference type="PDBsum" id="1N6Q"/>
<dbReference type="PDBsum" id="1NBY"/>
<dbReference type="PDBsum" id="1NBZ"/>
<dbReference type="PDBsum" id="1NDG"/>
<dbReference type="PDBsum" id="1NDM"/>
<dbReference type="PDBsum" id="1OAK"/>
<dbReference type="PDBsum" id="1OB1"/>
<dbReference type="PDBsum" id="1ORQ"/>
<dbReference type="PDBsum" id="1ORS"/>
<dbReference type="PDBsum" id="1OSP"/>
<dbReference type="PDBsum" id="1OTS"/>
<dbReference type="PDBsum" id="1OTT"/>
<dbReference type="PDBsum" id="1OTU"/>
<dbReference type="PDBsum" id="1P2C"/>
<dbReference type="PDBsum" id="1P7K"/>
<dbReference type="PDBsum" id="1PSK"/>
<dbReference type="PDBsum" id="1Q9O"/>
<dbReference type="PDBsum" id="1Q9W"/>
<dbReference type="PDBsum" id="1QGC"/>
<dbReference type="PDBsum" id="1R0A"/>
<dbReference type="PDBsum" id="1R24"/>
<dbReference type="PDBsum" id="1R3I"/>
<dbReference type="PDBsum" id="1R3J"/>
<dbReference type="PDBsum" id="1R3K"/>
<dbReference type="PDBsum" id="1R3L"/>
<dbReference type="PDBsum" id="1RIH"/>
<dbReference type="PDBsum" id="1RUQ"/>
<dbReference type="PDBsum" id="1RUR"/>
<dbReference type="PDBsum" id="1S5H"/>
<dbReference type="PDBsum" id="1SEQ"/>
<dbReference type="PDBsum" id="1T03"/>
<dbReference type="PDBsum" id="1T4K"/>
<dbReference type="PDBsum" id="1UB5"/>
<dbReference type="PDBsum" id="1UB6"/>
<dbReference type="PDBsum" id="1UWX"/>
<dbReference type="PDBsum" id="1XF2"/>
<dbReference type="PDBsum" id="1XF3"/>
<dbReference type="PDBsum" id="1XF4"/>
<dbReference type="PDBsum" id="1XGP"/>
<dbReference type="PDBsum" id="1XGQ"/>
<dbReference type="PDBsum" id="1XGU"/>
<dbReference type="PDBsum" id="25C8"/>
<dbReference type="PDBsum" id="2A6D"/>
<dbReference type="PDBsum" id="2A6K"/>
<dbReference type="PDBsum" id="2ADF"/>
<dbReference type="PDBsum" id="2ADJ"/>
<dbReference type="PDBsum" id="2AJS"/>
<dbReference type="PDBsum" id="2AJU"/>
<dbReference type="PDBsum" id="2AJV"/>
<dbReference type="PDBsum" id="2AJX"/>
<dbReference type="PDBsum" id="2AJY"/>
<dbReference type="PDBsum" id="2AJZ"/>
<dbReference type="PDBsum" id="2AK1"/>
<dbReference type="PDBsum" id="2BOB"/>
<dbReference type="PDBsum" id="2BOC"/>
<dbReference type="PDBsum" id="2CK0"/>
<dbReference type="PDBsum" id="2F19"/>
<dbReference type="PDBsum" id="2FR4"/>
<dbReference type="PDBsum" id="2G5B"/>
<dbReference type="PDBsum" id="2H8P"/>
<dbReference type="PDBsum" id="2HG5"/>
<dbReference type="PDBsum" id="2HRP"/>
<dbReference type="PDBsum" id="2MPA"/>
<dbReference type="PDBsum" id="2NR6"/>
<dbReference type="PDBsum" id="2Q76"/>
<dbReference type="PDBsum" id="2R1W"/>
<dbReference type="PDBsum" id="2R1Y"/>
<dbReference type="PDBsum" id="2R23"/>
<dbReference type="PDBsum" id="2R2B"/>
<dbReference type="PDBsum" id="2UYL"/>
<dbReference type="PDBsum" id="2V17"/>
<dbReference type="PDBsum" id="2V7H"/>
<dbReference type="PDBsum" id="2VC2"/>
<dbReference type="PDBsum" id="2VDK"/>
<dbReference type="PDBsum" id="2VDL"/>
<dbReference type="PDBsum" id="2VDM"/>
<dbReference type="PDBsum" id="2VDN"/>
<dbReference type="PDBsum" id="2VDO"/>
<dbReference type="PDBsum" id="2VDP"/>
<dbReference type="PDBsum" id="2VDQ"/>
<dbReference type="PDBsum" id="2VDR"/>
<dbReference type="PDBsum" id="2VL5"/>
<dbReference type="PDBsum" id="2VQ1"/>
<dbReference type="PDBsum" id="2VWE"/>
<dbReference type="PDBsum" id="2W60"/>
<dbReference type="PDBsum" id="2W65"/>
<dbReference type="PDBsum" id="2W9D"/>
<dbReference type="PDBsum" id="2W9E"/>
<dbReference type="PDBsum" id="2Z91"/>
<dbReference type="PDBsum" id="2Z92"/>
<dbReference type="PDBsum" id="2Z93"/>
<dbReference type="PDBsum" id="2ZJS"/>
<dbReference type="PDBsum" id="35C8"/>
<dbReference type="PDBsum" id="3BAE"/>
<dbReference type="PDBsum" id="3BGF"/>
<dbReference type="PDBsum" id="3BKC"/>
<dbReference type="PDBsum" id="3BKJ"/>
<dbReference type="PDBsum" id="3BKM"/>
<dbReference type="PDBsum" id="3BPC"/>
<dbReference type="PDBsum" id="3BQU"/>
<dbReference type="PDBsum" id="3BSZ"/>
<dbReference type="PDBsum" id="3BT2"/>
<dbReference type="PDBsum" id="3BZ4"/>
<dbReference type="PDBsum" id="3C5S"/>
<dbReference type="PDBsum" id="3C6S"/>
<dbReference type="PDBsum" id="3CFB"/>
<dbReference type="PDBsum" id="3CFC"/>
<dbReference type="PDBsum" id="3CFD"/>
<dbReference type="PDBsum" id="3CFE"/>
<dbReference type="PDBsum" id="3CK0"/>
<dbReference type="PDBsum" id="3CLE"/>
<dbReference type="PDBsum" id="3CLF"/>
<dbReference type="PDBsum" id="3CMO"/>
<dbReference type="PDBsum" id="3CVH"/>
<dbReference type="PDBsum" id="3CVI"/>
<dbReference type="PDBsum" id="3D9A"/>
<dbReference type="PDBsum" id="3EJZ"/>
<dbReference type="PDBsum" id="3EOT"/>
<dbReference type="PDBsum" id="3F7V"/>
<dbReference type="PDBsum" id="3F7Y"/>
<dbReference type="PDBsum" id="3FB6"/>
<dbReference type="PDBsum" id="3HFM"/>
<dbReference type="PDBsum" id="4KK5"/>
<dbReference type="PDBsum" id="4KK8"/>
<dbReference type="PDBsum" id="4KVC"/>
<dbReference type="PDBsum" id="4QNP"/>
<dbReference type="PDBsum" id="4ZXB"/>
<dbReference type="PDBsum" id="6FAB"/>
<dbReference type="PDBsum" id="8XKK"/>
<dbReference type="SMR" id="P01837"/>
<dbReference type="FunCoup" id="P01837">
    <property type="interactions" value="139"/>
</dbReference>
<dbReference type="IntAct" id="P01837">
    <property type="interactions" value="2"/>
</dbReference>
<dbReference type="MINT" id="P01837"/>
<dbReference type="GlyGen" id="P01837">
    <property type="glycosylation" value="1 site, 1 O-linked glycan (1 site)"/>
</dbReference>
<dbReference type="SwissPalm" id="P01837"/>
<dbReference type="CPTAC" id="non-CPTAC-3509"/>
<dbReference type="jPOST" id="P01837"/>
<dbReference type="PeptideAtlas" id="P01837"/>
<dbReference type="ProteomicsDB" id="267295"/>
<dbReference type="ABCD" id="P01837">
    <property type="antibodies" value="2 sequenced antibodies"/>
</dbReference>
<dbReference type="AGR" id="MGI:96495"/>
<dbReference type="MGI" id="MGI:96495">
    <property type="gene designation" value="Igkc"/>
</dbReference>
<dbReference type="InParanoid" id="P01837"/>
<dbReference type="PhylomeDB" id="P01837"/>
<dbReference type="ChiTaRS" id="Igkc">
    <property type="organism name" value="mouse"/>
</dbReference>
<dbReference type="EvolutionaryTrace" id="P01837"/>
<dbReference type="PRO" id="PR:P01837"/>
<dbReference type="Proteomes" id="UP000000589">
    <property type="component" value="Unplaced"/>
</dbReference>
<dbReference type="RNAct" id="P01837">
    <property type="molecule type" value="protein"/>
</dbReference>
<dbReference type="GO" id="GO:0005576">
    <property type="term" value="C:extracellular region"/>
    <property type="evidence" value="ECO:0000304"/>
    <property type="project" value="Reactome"/>
</dbReference>
<dbReference type="GO" id="GO:0005886">
    <property type="term" value="C:plasma membrane"/>
    <property type="evidence" value="ECO:0000304"/>
    <property type="project" value="Reactome"/>
</dbReference>
<dbReference type="GO" id="GO:0030183">
    <property type="term" value="P:B cell differentiation"/>
    <property type="evidence" value="ECO:0000315"/>
    <property type="project" value="MGI"/>
</dbReference>
<dbReference type="CDD" id="cd07699">
    <property type="entry name" value="IgC1_L"/>
    <property type="match status" value="1"/>
</dbReference>
<dbReference type="FunFam" id="2.60.40.10:FF:000283">
    <property type="entry name" value="Immunoglobulin kappa constant"/>
    <property type="match status" value="1"/>
</dbReference>
<dbReference type="Gene3D" id="2.60.40.10">
    <property type="entry name" value="Immunoglobulins"/>
    <property type="match status" value="1"/>
</dbReference>
<dbReference type="InterPro" id="IPR007110">
    <property type="entry name" value="Ig-like_dom"/>
</dbReference>
<dbReference type="InterPro" id="IPR036179">
    <property type="entry name" value="Ig-like_dom_sf"/>
</dbReference>
<dbReference type="InterPro" id="IPR013783">
    <property type="entry name" value="Ig-like_fold"/>
</dbReference>
<dbReference type="InterPro" id="IPR003006">
    <property type="entry name" value="Ig/MHC_CS"/>
</dbReference>
<dbReference type="InterPro" id="IPR003597">
    <property type="entry name" value="Ig_C1-set"/>
</dbReference>
<dbReference type="InterPro" id="IPR050380">
    <property type="entry name" value="Immune_Resp_Modulators"/>
</dbReference>
<dbReference type="PANTHER" id="PTHR23411">
    <property type="entry name" value="TAPASIN"/>
    <property type="match status" value="1"/>
</dbReference>
<dbReference type="Pfam" id="PF07654">
    <property type="entry name" value="C1-set"/>
    <property type="match status" value="1"/>
</dbReference>
<dbReference type="SMART" id="SM00407">
    <property type="entry name" value="IGc1"/>
    <property type="match status" value="1"/>
</dbReference>
<dbReference type="SUPFAM" id="SSF48726">
    <property type="entry name" value="Immunoglobulin"/>
    <property type="match status" value="1"/>
</dbReference>
<dbReference type="PROSITE" id="PS50835">
    <property type="entry name" value="IG_LIKE"/>
    <property type="match status" value="1"/>
</dbReference>
<dbReference type="PROSITE" id="PS00290">
    <property type="entry name" value="IG_MHC"/>
    <property type="match status" value="1"/>
</dbReference>
<sequence>RADAAPTVSIFPPSSEQLTSGGASVVCFLNNFYPKDINVKWKIDGSERQNGVLNSWTDQDSKDSTYSMSSTLTLTKDEYERHNSYTCEATHKTSTSPIVKSFNRNEC</sequence>
<gene>
    <name evidence="5" type="primary">Igkc</name>
</gene>
<feature type="chain" id="PRO_0000153597" description="Immunoglobulin kappa constant">
    <location>
        <begin position="1" status="less than"/>
        <end position="107"/>
    </location>
</feature>
<feature type="domain" description="Ig-like" evidence="2">
    <location>
        <begin position="6"/>
        <end position="103"/>
    </location>
</feature>
<feature type="disulfide bond" evidence="2 3">
    <location>
        <begin position="27"/>
        <end position="87"/>
    </location>
</feature>
<feature type="disulfide bond" description="Interchain (with a heavy chain)" evidence="2 3">
    <location>
        <position position="107"/>
    </location>
</feature>
<feature type="non-terminal residue">
    <location>
        <position position="1"/>
    </location>
</feature>
<feature type="strand" evidence="7">
    <location>
        <begin position="7"/>
        <end position="11"/>
    </location>
</feature>
<feature type="helix" evidence="7">
    <location>
        <begin position="15"/>
        <end position="19"/>
    </location>
</feature>
<feature type="strand" evidence="7">
    <location>
        <begin position="22"/>
        <end position="35"/>
    </location>
</feature>
<feature type="strand" evidence="7">
    <location>
        <begin position="38"/>
        <end position="43"/>
    </location>
</feature>
<feature type="strand" evidence="7">
    <location>
        <begin position="46"/>
        <end position="48"/>
    </location>
</feature>
<feature type="strand" evidence="7">
    <location>
        <begin position="52"/>
        <end position="56"/>
    </location>
</feature>
<feature type="turn" evidence="7">
    <location>
        <begin position="61"/>
        <end position="63"/>
    </location>
</feature>
<feature type="strand" evidence="7">
    <location>
        <begin position="66"/>
        <end position="75"/>
    </location>
</feature>
<feature type="helix" evidence="7">
    <location>
        <begin position="76"/>
        <end position="79"/>
    </location>
</feature>
<feature type="strand" evidence="7">
    <location>
        <begin position="84"/>
        <end position="90"/>
    </location>
</feature>
<feature type="strand" evidence="8">
    <location>
        <begin position="91"/>
        <end position="96"/>
    </location>
</feature>
<feature type="strand" evidence="7">
    <location>
        <begin position="98"/>
        <end position="103"/>
    </location>
</feature>
<feature type="helix" evidence="6">
    <location>
        <begin position="104"/>
        <end position="106"/>
    </location>
</feature>
<evidence type="ECO:0000250" key="1">
    <source>
        <dbReference type="UniProtKB" id="P01834"/>
    </source>
</evidence>
<evidence type="ECO:0000255" key="2">
    <source>
        <dbReference type="PROSITE-ProRule" id="PRU00114"/>
    </source>
</evidence>
<evidence type="ECO:0000269" key="3">
    <source>
    </source>
</evidence>
<evidence type="ECO:0000303" key="4">
    <source>
    </source>
</evidence>
<evidence type="ECO:0000312" key="5">
    <source>
        <dbReference type="MGI" id="MGI:96495"/>
    </source>
</evidence>
<evidence type="ECO:0007829" key="6">
    <source>
        <dbReference type="PDB" id="1Q9O"/>
    </source>
</evidence>
<evidence type="ECO:0007829" key="7">
    <source>
        <dbReference type="PDB" id="1RUR"/>
    </source>
</evidence>
<evidence type="ECO:0007829" key="8">
    <source>
        <dbReference type="PDB" id="1UB6"/>
    </source>
</evidence>
<name>IGKC_MOUSE</name>
<protein>
    <recommendedName>
        <fullName evidence="1">Immunoglobulin kappa constant</fullName>
    </recommendedName>
    <alternativeName>
        <fullName evidence="4">Ig kappa chain C region MOPC 21</fullName>
    </alternativeName>
</protein>
<accession>P01837</accession>
<accession>A0A075B5P2</accession>
<reference key="1">
    <citation type="journal article" date="1972" name="Biochem. J.">
        <title>The complete amino acid sequence of a mouse kappa light chain.</title>
        <authorList>
            <person name="Svasti J."/>
            <person name="Milstein C."/>
        </authorList>
    </citation>
    <scope>PROTEIN SEQUENCE</scope>
</reference>
<reference key="2">
    <citation type="journal article" date="1978" name="Cell">
        <title>Complete sequence of constant and 3' noncoding regions of an immunoglobulin mRNA using the dideoxynucleotide method of RNA sequencing.</title>
        <authorList>
            <person name="Hamlyn P.H."/>
            <person name="Brownlee G.G."/>
            <person name="Cheng C.-C."/>
            <person name="Gait M.J."/>
            <person name="Milstein C."/>
        </authorList>
    </citation>
    <scope>NUCLEOTIDE SEQUENCE [GENOMIC DNA]</scope>
    <scope>SEQUENCE REVISION TO 54-60</scope>
</reference>
<reference key="3">
    <citation type="journal article" date="1981" name="Nucleic Acids Res.">
        <title>Complete sequence of an immunoglobulin mRNA using specific priming and the dideoxynucleotide method of RNA sequencing.</title>
        <authorList>
            <person name="Hamlyn P.H."/>
            <person name="Gait M.J."/>
            <person name="Milstein C."/>
        </authorList>
    </citation>
    <scope>NUCLEOTIDE SEQUENCE [GENOMIC DNA]</scope>
</reference>
<reference key="4">
    <citation type="journal article" date="1981" name="J. Biol. Chem.">
        <title>The nucleotide sequence of a 5.5-kilobase DNA segment containing the mouse kappa immunoglobulin J and C region genes.</title>
        <authorList>
            <person name="Max E.E."/>
            <person name="Maizel J.V. Jr."/>
            <person name="Leder P."/>
        </authorList>
    </citation>
    <scope>NUCLEOTIDE SEQUENCE [GENOMIC DNA]</scope>
</reference>
<reference key="5">
    <citation type="journal article" date="1988" name="Eur. J. Biochem.">
        <title>Expression in non-lymphoid cells of mouse recombinant immunoglobulin directed against the tumour marker human placental alkaline phosphatase.</title>
        <authorList>
            <person name="de Waele P."/>
            <person name="Feys V."/>
            <person name="van de Voorde A."/>
            <person name="Molemans F."/>
            <person name="Fiers W."/>
        </authorList>
    </citation>
    <scope>NUCLEOTIDE SEQUENCE [GENOMIC DNA]</scope>
</reference>
<reference key="6">
    <citation type="journal article" date="2009" name="PLoS Biol.">
        <title>Lineage-specific biology revealed by a finished genome assembly of the mouse.</title>
        <authorList>
            <person name="Church D.M."/>
            <person name="Goodstadt L."/>
            <person name="Hillier L.W."/>
            <person name="Zody M.C."/>
            <person name="Goldstein S."/>
            <person name="She X."/>
            <person name="Bult C.J."/>
            <person name="Agarwala R."/>
            <person name="Cherry J.L."/>
            <person name="DiCuccio M."/>
            <person name="Hlavina W."/>
            <person name="Kapustin Y."/>
            <person name="Meric P."/>
            <person name="Maglott D."/>
            <person name="Birtle Z."/>
            <person name="Marques A.C."/>
            <person name="Graves T."/>
            <person name="Zhou S."/>
            <person name="Teague B."/>
            <person name="Potamousis K."/>
            <person name="Churas C."/>
            <person name="Place M."/>
            <person name="Herschleb J."/>
            <person name="Runnheim R."/>
            <person name="Forrest D."/>
            <person name="Amos-Landgraf J."/>
            <person name="Schwartz D.C."/>
            <person name="Cheng Z."/>
            <person name="Lindblad-Toh K."/>
            <person name="Eichler E.E."/>
            <person name="Ponting C.P."/>
        </authorList>
    </citation>
    <scope>NUCLEOTIDE SEQUENCE [LARGE SCALE GENOMIC DNA]</scope>
    <source>
        <strain>C57BL/6J</strain>
    </source>
</reference>
<reference key="7">
    <citation type="journal article" date="1980" name="Cell">
        <title>Cloned human and mouse kappa immunoglobulin constant and J region genes conserve homology in functional segments.</title>
        <authorList>
            <person name="Hieter P.A."/>
            <person name="Max E.E."/>
            <person name="Seidman J.G."/>
            <person name="Maizel J.V. Jr."/>
            <person name="Leder P."/>
        </authorList>
    </citation>
    <scope>NUCLEOTIDE SEQUENCE [GENOMIC DNA] OF 2-107</scope>
</reference>
<reference key="8">
    <citation type="journal article" date="1981" name="Nucleic Acids Res.">
        <title>DNA sequence of the constant gene region of the mouse immunoglobulin kappa chain.</title>
        <authorList>
            <person name="Altenburger W."/>
            <person name="Neumaier P.S."/>
            <person name="Steinmetz M."/>
            <person name="Zachau H.G."/>
        </authorList>
    </citation>
    <scope>NUCLEOTIDE SEQUENCE [GENOMIC DNA] OF 2-107</scope>
</reference>
<reference key="9">
    <citation type="journal article" date="1972" name="Biochem. J.">
        <title>The disulphide bridges of a mouse immunoglobulin G1 protein.</title>
        <authorList>
            <person name="Svasti J."/>
            <person name="Milstein C."/>
        </authorList>
    </citation>
    <scope>DISULFIDE BONDS</scope>
</reference>
<reference key="10">
    <citation type="journal article" date="2010" name="Cell">
        <title>A tissue-specific atlas of mouse protein phosphorylation and expression.</title>
        <authorList>
            <person name="Huttlin E.L."/>
            <person name="Jedrychowski M.P."/>
            <person name="Elias J.E."/>
            <person name="Goswami T."/>
            <person name="Rad R."/>
            <person name="Beausoleil S.A."/>
            <person name="Villen J."/>
            <person name="Haas W."/>
            <person name="Sowa M.E."/>
            <person name="Gygi S.P."/>
        </authorList>
    </citation>
    <scope>IDENTIFICATION BY MASS SPECTROMETRY [LARGE SCALE ANALYSIS]</scope>
    <source>
        <tissue>Brown adipose tissue</tissue>
        <tissue>Heart</tissue>
        <tissue>Kidney</tissue>
        <tissue>Liver</tissue>
        <tissue>Lung</tissue>
        <tissue>Spleen</tissue>
        <tissue>Testis</tissue>
    </source>
</reference>
<proteinExistence type="evidence at protein level"/>
<organism>
    <name type="scientific">Mus musculus</name>
    <name type="common">Mouse</name>
    <dbReference type="NCBI Taxonomy" id="10090"/>
    <lineage>
        <taxon>Eukaryota</taxon>
        <taxon>Metazoa</taxon>
        <taxon>Chordata</taxon>
        <taxon>Craniata</taxon>
        <taxon>Vertebrata</taxon>
        <taxon>Euteleostomi</taxon>
        <taxon>Mammalia</taxon>
        <taxon>Eutheria</taxon>
        <taxon>Euarchontoglires</taxon>
        <taxon>Glires</taxon>
        <taxon>Rodentia</taxon>
        <taxon>Myomorpha</taxon>
        <taxon>Muroidea</taxon>
        <taxon>Muridae</taxon>
        <taxon>Murinae</taxon>
        <taxon>Mus</taxon>
        <taxon>Mus</taxon>
    </lineage>
</organism>